<comment type="function">
    <text evidence="1">Catalyzes the attachment of glutamate to tRNA(Glu) in a two-step reaction: glutamate is first activated by ATP to form Glu-AMP and then transferred to the acceptor end of tRNA(Glu).</text>
</comment>
<comment type="catalytic activity">
    <reaction evidence="1">
        <text>tRNA(Glu) + L-glutamate + ATP = L-glutamyl-tRNA(Glu) + AMP + diphosphate</text>
        <dbReference type="Rhea" id="RHEA:23540"/>
        <dbReference type="Rhea" id="RHEA-COMP:9663"/>
        <dbReference type="Rhea" id="RHEA-COMP:9680"/>
        <dbReference type="ChEBI" id="CHEBI:29985"/>
        <dbReference type="ChEBI" id="CHEBI:30616"/>
        <dbReference type="ChEBI" id="CHEBI:33019"/>
        <dbReference type="ChEBI" id="CHEBI:78442"/>
        <dbReference type="ChEBI" id="CHEBI:78520"/>
        <dbReference type="ChEBI" id="CHEBI:456215"/>
        <dbReference type="EC" id="6.1.1.17"/>
    </reaction>
</comment>
<comment type="subunit">
    <text evidence="1">Monomer.</text>
</comment>
<comment type="subcellular location">
    <subcellularLocation>
        <location evidence="1">Cytoplasm</location>
    </subcellularLocation>
</comment>
<comment type="similarity">
    <text evidence="1">Belongs to the class-I aminoacyl-tRNA synthetase family. Glutamate--tRNA ligase type 1 subfamily.</text>
</comment>
<feature type="chain" id="PRO_0000119562" description="Glutamate--tRNA ligase">
    <location>
        <begin position="1"/>
        <end position="485"/>
    </location>
</feature>
<feature type="short sequence motif" description="'HIGH' region" evidence="1">
    <location>
        <begin position="10"/>
        <end position="20"/>
    </location>
</feature>
<feature type="short sequence motif" description="'KMSKS' region" evidence="1">
    <location>
        <begin position="253"/>
        <end position="257"/>
    </location>
</feature>
<feature type="binding site" evidence="1">
    <location>
        <position position="256"/>
    </location>
    <ligand>
        <name>ATP</name>
        <dbReference type="ChEBI" id="CHEBI:30616"/>
    </ligand>
</feature>
<name>SYE_ENTFA</name>
<gene>
    <name evidence="1" type="primary">gltX</name>
    <name type="ordered locus">EF_0043</name>
</gene>
<evidence type="ECO:0000255" key="1">
    <source>
        <dbReference type="HAMAP-Rule" id="MF_00022"/>
    </source>
</evidence>
<reference key="1">
    <citation type="journal article" date="2003" name="Science">
        <title>Role of mobile DNA in the evolution of vancomycin-resistant Enterococcus faecalis.</title>
        <authorList>
            <person name="Paulsen I.T."/>
            <person name="Banerjei L."/>
            <person name="Myers G.S.A."/>
            <person name="Nelson K.E."/>
            <person name="Seshadri R."/>
            <person name="Read T.D."/>
            <person name="Fouts D.E."/>
            <person name="Eisen J.A."/>
            <person name="Gill S.R."/>
            <person name="Heidelberg J.F."/>
            <person name="Tettelin H."/>
            <person name="Dodson R.J."/>
            <person name="Umayam L.A."/>
            <person name="Brinkac L.M."/>
            <person name="Beanan M.J."/>
            <person name="Daugherty S.C."/>
            <person name="DeBoy R.T."/>
            <person name="Durkin S.A."/>
            <person name="Kolonay J.F."/>
            <person name="Madupu R."/>
            <person name="Nelson W.C."/>
            <person name="Vamathevan J.J."/>
            <person name="Tran B."/>
            <person name="Upton J."/>
            <person name="Hansen T."/>
            <person name="Shetty J."/>
            <person name="Khouri H.M."/>
            <person name="Utterback T.R."/>
            <person name="Radune D."/>
            <person name="Ketchum K.A."/>
            <person name="Dougherty B.A."/>
            <person name="Fraser C.M."/>
        </authorList>
    </citation>
    <scope>NUCLEOTIDE SEQUENCE [LARGE SCALE GENOMIC DNA]</scope>
    <source>
        <strain>ATCC 700802 / V583</strain>
    </source>
</reference>
<dbReference type="EC" id="6.1.1.17" evidence="1"/>
<dbReference type="EMBL" id="AE016830">
    <property type="protein sequence ID" value="AAO79925.1"/>
    <property type="molecule type" value="Genomic_DNA"/>
</dbReference>
<dbReference type="RefSeq" id="NP_813853.1">
    <property type="nucleotide sequence ID" value="NC_004668.1"/>
</dbReference>
<dbReference type="RefSeq" id="WP_010706819.1">
    <property type="nucleotide sequence ID" value="NZ_KE136524.1"/>
</dbReference>
<dbReference type="SMR" id="Q839V7"/>
<dbReference type="STRING" id="226185.EF_0043"/>
<dbReference type="EnsemblBacteria" id="AAO79925">
    <property type="protein sequence ID" value="AAO79925"/>
    <property type="gene ID" value="EF_0043"/>
</dbReference>
<dbReference type="KEGG" id="efa:EF0043"/>
<dbReference type="PATRIC" id="fig|226185.45.peg.213"/>
<dbReference type="eggNOG" id="COG0008">
    <property type="taxonomic scope" value="Bacteria"/>
</dbReference>
<dbReference type="HOGENOM" id="CLU_015768_6_1_9"/>
<dbReference type="Proteomes" id="UP000001415">
    <property type="component" value="Chromosome"/>
</dbReference>
<dbReference type="GO" id="GO:0005829">
    <property type="term" value="C:cytosol"/>
    <property type="evidence" value="ECO:0007669"/>
    <property type="project" value="TreeGrafter"/>
</dbReference>
<dbReference type="GO" id="GO:0005524">
    <property type="term" value="F:ATP binding"/>
    <property type="evidence" value="ECO:0007669"/>
    <property type="project" value="UniProtKB-UniRule"/>
</dbReference>
<dbReference type="GO" id="GO:0004818">
    <property type="term" value="F:glutamate-tRNA ligase activity"/>
    <property type="evidence" value="ECO:0007669"/>
    <property type="project" value="UniProtKB-UniRule"/>
</dbReference>
<dbReference type="GO" id="GO:0000049">
    <property type="term" value="F:tRNA binding"/>
    <property type="evidence" value="ECO:0007669"/>
    <property type="project" value="InterPro"/>
</dbReference>
<dbReference type="GO" id="GO:0008270">
    <property type="term" value="F:zinc ion binding"/>
    <property type="evidence" value="ECO:0007669"/>
    <property type="project" value="InterPro"/>
</dbReference>
<dbReference type="GO" id="GO:0006424">
    <property type="term" value="P:glutamyl-tRNA aminoacylation"/>
    <property type="evidence" value="ECO:0007669"/>
    <property type="project" value="UniProtKB-UniRule"/>
</dbReference>
<dbReference type="CDD" id="cd00808">
    <property type="entry name" value="GluRS_core"/>
    <property type="match status" value="1"/>
</dbReference>
<dbReference type="FunFam" id="1.10.10.350:FF:000002">
    <property type="entry name" value="Glutamate--tRNA ligase"/>
    <property type="match status" value="1"/>
</dbReference>
<dbReference type="FunFam" id="3.40.50.620:FF:000007">
    <property type="entry name" value="Glutamate--tRNA ligase"/>
    <property type="match status" value="1"/>
</dbReference>
<dbReference type="Gene3D" id="1.10.10.350">
    <property type="match status" value="1"/>
</dbReference>
<dbReference type="Gene3D" id="3.40.50.620">
    <property type="entry name" value="HUPs"/>
    <property type="match status" value="1"/>
</dbReference>
<dbReference type="HAMAP" id="MF_00022">
    <property type="entry name" value="Glu_tRNA_synth_type1"/>
    <property type="match status" value="1"/>
</dbReference>
<dbReference type="InterPro" id="IPR045462">
    <property type="entry name" value="aa-tRNA-synth_I_cd-bd"/>
</dbReference>
<dbReference type="InterPro" id="IPR020751">
    <property type="entry name" value="aa-tRNA-synth_I_codon-bd_sub2"/>
</dbReference>
<dbReference type="InterPro" id="IPR001412">
    <property type="entry name" value="aa-tRNA-synth_I_CS"/>
</dbReference>
<dbReference type="InterPro" id="IPR008925">
    <property type="entry name" value="aa_tRNA-synth_I_cd-bd_sf"/>
</dbReference>
<dbReference type="InterPro" id="IPR004527">
    <property type="entry name" value="Glu-tRNA-ligase_bac/mito"/>
</dbReference>
<dbReference type="InterPro" id="IPR000924">
    <property type="entry name" value="Glu/Gln-tRNA-synth"/>
</dbReference>
<dbReference type="InterPro" id="IPR020058">
    <property type="entry name" value="Glu/Gln-tRNA-synth_Ib_cat-dom"/>
</dbReference>
<dbReference type="InterPro" id="IPR049940">
    <property type="entry name" value="GluQ/Sye"/>
</dbReference>
<dbReference type="InterPro" id="IPR033910">
    <property type="entry name" value="GluRS_core"/>
</dbReference>
<dbReference type="InterPro" id="IPR014729">
    <property type="entry name" value="Rossmann-like_a/b/a_fold"/>
</dbReference>
<dbReference type="NCBIfam" id="TIGR00464">
    <property type="entry name" value="gltX_bact"/>
    <property type="match status" value="1"/>
</dbReference>
<dbReference type="PANTHER" id="PTHR43311">
    <property type="entry name" value="GLUTAMATE--TRNA LIGASE"/>
    <property type="match status" value="1"/>
</dbReference>
<dbReference type="PANTHER" id="PTHR43311:SF2">
    <property type="entry name" value="GLUTAMATE--TRNA LIGASE, MITOCHONDRIAL-RELATED"/>
    <property type="match status" value="1"/>
</dbReference>
<dbReference type="Pfam" id="PF19269">
    <property type="entry name" value="Anticodon_2"/>
    <property type="match status" value="1"/>
</dbReference>
<dbReference type="Pfam" id="PF00749">
    <property type="entry name" value="tRNA-synt_1c"/>
    <property type="match status" value="1"/>
</dbReference>
<dbReference type="PRINTS" id="PR00987">
    <property type="entry name" value="TRNASYNTHGLU"/>
</dbReference>
<dbReference type="SUPFAM" id="SSF48163">
    <property type="entry name" value="An anticodon-binding domain of class I aminoacyl-tRNA synthetases"/>
    <property type="match status" value="1"/>
</dbReference>
<dbReference type="SUPFAM" id="SSF52374">
    <property type="entry name" value="Nucleotidylyl transferase"/>
    <property type="match status" value="1"/>
</dbReference>
<dbReference type="PROSITE" id="PS00178">
    <property type="entry name" value="AA_TRNA_LIGASE_I"/>
    <property type="match status" value="1"/>
</dbReference>
<organism>
    <name type="scientific">Enterococcus faecalis (strain ATCC 700802 / V583)</name>
    <dbReference type="NCBI Taxonomy" id="226185"/>
    <lineage>
        <taxon>Bacteria</taxon>
        <taxon>Bacillati</taxon>
        <taxon>Bacillota</taxon>
        <taxon>Bacilli</taxon>
        <taxon>Lactobacillales</taxon>
        <taxon>Enterococcaceae</taxon>
        <taxon>Enterococcus</taxon>
    </lineage>
</organism>
<accession>Q839V7</accession>
<protein>
    <recommendedName>
        <fullName evidence="1">Glutamate--tRNA ligase</fullName>
        <ecNumber evidence="1">6.1.1.17</ecNumber>
    </recommendedName>
    <alternativeName>
        <fullName evidence="1">Glutamyl-tRNA synthetase</fullName>
        <shortName evidence="1">GluRS</shortName>
    </alternativeName>
</protein>
<proteinExistence type="inferred from homology"/>
<sequence length="485" mass="55363">MTKVRVRYAPSPTGHLHIGNARTALFNYLFARHNDGEFIIRIEDTDQKRNIEDGEKSQLENLAWLGMEWDESPAHPGEYGPYRQSERKEIYQPLIDQLLSSNRAYKCYCTPEELEAEREAQQARGEMPHYAGTCANLTPSEQAAKEAAGLEPVIRFRVPRNTEYKFDDIVKGEITFESDNIGGDFVIQKRDGMPTYNFAVAVDDHLMKISHVLRGDDHIANTPKQLMIYEAFEWTPPVFGHMTLIINSETGKKLSKRDETILQFIEQYRELGYLPEAMFNFIALLGWSPVGEEEIFSQEDLIKLFDEQRLSKSPAAFDAKKLEWINNQYMKQMDLSELTDMCIPYLVADGRVEENPSPEKIEWLKQLVSLYQPQMSYAAEIVELSNLFFNEHPVLDDAAKEFLQGETVPTVLHAFKEQLEALDVFDVPSIKAAIKAVQKETGVKGKNLFMPIRIAVSGQMHGPELGETIELLGKEKALDHLNKVL</sequence>
<keyword id="KW-0030">Aminoacyl-tRNA synthetase</keyword>
<keyword id="KW-0067">ATP-binding</keyword>
<keyword id="KW-0963">Cytoplasm</keyword>
<keyword id="KW-0436">Ligase</keyword>
<keyword id="KW-0547">Nucleotide-binding</keyword>
<keyword id="KW-0648">Protein biosynthesis</keyword>
<keyword id="KW-1185">Reference proteome</keyword>